<organism>
    <name type="scientific">Candida albicans (strain SC5314 / ATCC MYA-2876)</name>
    <name type="common">Yeast</name>
    <dbReference type="NCBI Taxonomy" id="237561"/>
    <lineage>
        <taxon>Eukaryota</taxon>
        <taxon>Fungi</taxon>
        <taxon>Dikarya</taxon>
        <taxon>Ascomycota</taxon>
        <taxon>Saccharomycotina</taxon>
        <taxon>Pichiomycetes</taxon>
        <taxon>Debaryomycetaceae</taxon>
        <taxon>Candida/Lodderomyces clade</taxon>
        <taxon>Candida</taxon>
    </lineage>
</organism>
<dbReference type="EC" id="5.4.2.11"/>
<dbReference type="EMBL" id="CP017624">
    <property type="protein sequence ID" value="AOW27363.1"/>
    <property type="molecule type" value="Genomic_DNA"/>
</dbReference>
<dbReference type="RefSeq" id="XP_721022.1">
    <property type="nucleotide sequence ID" value="XM_715929.2"/>
</dbReference>
<dbReference type="SMR" id="P82612"/>
<dbReference type="BioGRID" id="1220370">
    <property type="interactions" value="5"/>
</dbReference>
<dbReference type="FunCoup" id="P82612">
    <property type="interactions" value="1258"/>
</dbReference>
<dbReference type="STRING" id="237561.P82612"/>
<dbReference type="MoonProt" id="P82612"/>
<dbReference type="EnsemblFungi" id="C2_03270W_A-T">
    <property type="protein sequence ID" value="C2_03270W_A-T-p1"/>
    <property type="gene ID" value="C2_03270W_A"/>
</dbReference>
<dbReference type="GeneID" id="3637431"/>
<dbReference type="KEGG" id="cal:CAALFM_C203270WA"/>
<dbReference type="CGD" id="CAL0000185566">
    <property type="gene designation" value="GPM1"/>
</dbReference>
<dbReference type="VEuPathDB" id="FungiDB:C2_03270W_A"/>
<dbReference type="eggNOG" id="KOG0235">
    <property type="taxonomic scope" value="Eukaryota"/>
</dbReference>
<dbReference type="HOGENOM" id="CLU_033323_1_1_1"/>
<dbReference type="InParanoid" id="P82612"/>
<dbReference type="OMA" id="MLPYWYD"/>
<dbReference type="OrthoDB" id="4818801at2759"/>
<dbReference type="UniPathway" id="UPA00109">
    <property type="reaction ID" value="UER00186"/>
</dbReference>
<dbReference type="PRO" id="PR:P82612"/>
<dbReference type="Proteomes" id="UP000000559">
    <property type="component" value="Chromosome 2"/>
</dbReference>
<dbReference type="GO" id="GO:0009986">
    <property type="term" value="C:cell surface"/>
    <property type="evidence" value="ECO:0000314"/>
    <property type="project" value="CGD"/>
</dbReference>
<dbReference type="GO" id="GO:0005829">
    <property type="term" value="C:cytosol"/>
    <property type="evidence" value="ECO:0007669"/>
    <property type="project" value="EnsemblFungi"/>
</dbReference>
<dbReference type="GO" id="GO:0062040">
    <property type="term" value="C:fungal biofilm matrix"/>
    <property type="evidence" value="ECO:0000314"/>
    <property type="project" value="CGD"/>
</dbReference>
<dbReference type="GO" id="GO:0009277">
    <property type="term" value="C:fungal-type cell wall"/>
    <property type="evidence" value="ECO:0000314"/>
    <property type="project" value="CGD"/>
</dbReference>
<dbReference type="GO" id="GO:0030446">
    <property type="term" value="C:hyphal cell wall"/>
    <property type="evidence" value="ECO:0000314"/>
    <property type="project" value="CGD"/>
</dbReference>
<dbReference type="GO" id="GO:0005758">
    <property type="term" value="C:mitochondrial intermembrane space"/>
    <property type="evidence" value="ECO:0007669"/>
    <property type="project" value="EnsemblFungi"/>
</dbReference>
<dbReference type="GO" id="GO:0004619">
    <property type="term" value="F:phosphoglycerate mutase activity"/>
    <property type="evidence" value="ECO:0000314"/>
    <property type="project" value="CGD"/>
</dbReference>
<dbReference type="GO" id="GO:0044406">
    <property type="term" value="P:adhesion of symbiont to host"/>
    <property type="evidence" value="ECO:0000314"/>
    <property type="project" value="CGD"/>
</dbReference>
<dbReference type="GO" id="GO:0051701">
    <property type="term" value="P:biological process involved in interaction with host"/>
    <property type="evidence" value="ECO:0000353"/>
    <property type="project" value="CGD"/>
</dbReference>
<dbReference type="GO" id="GO:0006094">
    <property type="term" value="P:gluconeogenesis"/>
    <property type="evidence" value="ECO:0007669"/>
    <property type="project" value="EnsemblFungi"/>
</dbReference>
<dbReference type="GO" id="GO:0006096">
    <property type="term" value="P:glycolytic process"/>
    <property type="evidence" value="ECO:0007669"/>
    <property type="project" value="UniProtKB-UniPathway"/>
</dbReference>
<dbReference type="CDD" id="cd07067">
    <property type="entry name" value="HP_PGM_like"/>
    <property type="match status" value="1"/>
</dbReference>
<dbReference type="FunFam" id="3.40.50.1240:FF:000012">
    <property type="entry name" value="Phosphoglycerate mutase 1"/>
    <property type="match status" value="1"/>
</dbReference>
<dbReference type="Gene3D" id="3.40.50.1240">
    <property type="entry name" value="Phosphoglycerate mutase-like"/>
    <property type="match status" value="1"/>
</dbReference>
<dbReference type="HAMAP" id="MF_01039">
    <property type="entry name" value="PGAM_GpmA"/>
    <property type="match status" value="1"/>
</dbReference>
<dbReference type="InterPro" id="IPR013078">
    <property type="entry name" value="His_Pase_superF_clade-1"/>
</dbReference>
<dbReference type="InterPro" id="IPR029033">
    <property type="entry name" value="His_PPase_superfam"/>
</dbReference>
<dbReference type="InterPro" id="IPR001345">
    <property type="entry name" value="PG/BPGM_mutase_AS"/>
</dbReference>
<dbReference type="InterPro" id="IPR005952">
    <property type="entry name" value="Phosphogly_mut1"/>
</dbReference>
<dbReference type="NCBIfam" id="TIGR01258">
    <property type="entry name" value="pgm_1"/>
    <property type="match status" value="1"/>
</dbReference>
<dbReference type="NCBIfam" id="NF010713">
    <property type="entry name" value="PRK14115.1"/>
    <property type="match status" value="1"/>
</dbReference>
<dbReference type="NCBIfam" id="NF010718">
    <property type="entry name" value="PRK14120.1"/>
    <property type="match status" value="1"/>
</dbReference>
<dbReference type="PANTHER" id="PTHR11931">
    <property type="entry name" value="PHOSPHOGLYCERATE MUTASE"/>
    <property type="match status" value="1"/>
</dbReference>
<dbReference type="Pfam" id="PF00300">
    <property type="entry name" value="His_Phos_1"/>
    <property type="match status" value="1"/>
</dbReference>
<dbReference type="PIRSF" id="PIRSF000709">
    <property type="entry name" value="6PFK_2-Ptase"/>
    <property type="match status" value="1"/>
</dbReference>
<dbReference type="SMART" id="SM00855">
    <property type="entry name" value="PGAM"/>
    <property type="match status" value="1"/>
</dbReference>
<dbReference type="SUPFAM" id="SSF53254">
    <property type="entry name" value="Phosphoglycerate mutase-like"/>
    <property type="match status" value="1"/>
</dbReference>
<dbReference type="PROSITE" id="PS00175">
    <property type="entry name" value="PG_MUTASE"/>
    <property type="match status" value="1"/>
</dbReference>
<sequence>MPKLVLVRHGQSEWNEKNLFTGWVDVRLSETGQKEAKRAGELLKEAGINVDVLHTSKLSRAIQTANIALDAADQLYVPVKRSWRLNERHYGALQGKDKAQTLEAYGQEKFQIWRRSFDVPPPKIDPKDEYSQVGDRRYADVDPAVVPLTESLALVIDRLLPYWQDEIAGDLLAGKVVLIAAHGNSLRALVKHLDNISDEDIAGLNIPTGIPLVYELDENLKPTKPSYYLDPEAAAAGAAAVAAQGQKK</sequence>
<protein>
    <recommendedName>
        <fullName>Phosphoglycerate mutase</fullName>
        <shortName>PGAM</shortName>
        <ecNumber>5.4.2.11</ecNumber>
    </recommendedName>
    <alternativeName>
        <fullName>BPG-dependent PGAM</fullName>
    </alternativeName>
    <alternativeName>
        <fullName>MPGM</fullName>
    </alternativeName>
    <alternativeName>
        <fullName>Phosphoglyceromutase</fullName>
    </alternativeName>
</protein>
<gene>
    <name type="primary">GPM1</name>
    <name type="ordered locus">CAALFM_C203270WA</name>
    <name type="ORF">CaO19.8522</name>
    <name type="ORF">CaO19.903</name>
</gene>
<reference key="1">
    <citation type="journal article" date="2004" name="Proc. Natl. Acad. Sci. U.S.A.">
        <title>The diploid genome sequence of Candida albicans.</title>
        <authorList>
            <person name="Jones T."/>
            <person name="Federspiel N.A."/>
            <person name="Chibana H."/>
            <person name="Dungan J."/>
            <person name="Kalman S."/>
            <person name="Magee B.B."/>
            <person name="Newport G."/>
            <person name="Thorstenson Y.R."/>
            <person name="Agabian N."/>
            <person name="Magee P.T."/>
            <person name="Davis R.W."/>
            <person name="Scherer S."/>
        </authorList>
    </citation>
    <scope>NUCLEOTIDE SEQUENCE [LARGE SCALE GENOMIC DNA]</scope>
    <source>
        <strain>SC5314 / ATCC MYA-2876</strain>
    </source>
</reference>
<reference key="2">
    <citation type="journal article" date="2007" name="Genome Biol.">
        <title>Assembly of the Candida albicans genome into sixteen supercontigs aligned on the eight chromosomes.</title>
        <authorList>
            <person name="van het Hoog M."/>
            <person name="Rast T.J."/>
            <person name="Martchenko M."/>
            <person name="Grindle S."/>
            <person name="Dignard D."/>
            <person name="Hogues H."/>
            <person name="Cuomo C."/>
            <person name="Berriman M."/>
            <person name="Scherer S."/>
            <person name="Magee B.B."/>
            <person name="Whiteway M."/>
            <person name="Chibana H."/>
            <person name="Nantel A."/>
            <person name="Magee P.T."/>
        </authorList>
    </citation>
    <scope>GENOME REANNOTATION</scope>
    <source>
        <strain>SC5314 / ATCC MYA-2876</strain>
    </source>
</reference>
<reference key="3">
    <citation type="journal article" date="2013" name="Genome Biol.">
        <title>Assembly of a phased diploid Candida albicans genome facilitates allele-specific measurements and provides a simple model for repeat and indel structure.</title>
        <authorList>
            <person name="Muzzey D."/>
            <person name="Schwartz K."/>
            <person name="Weissman J.S."/>
            <person name="Sherlock G."/>
        </authorList>
    </citation>
    <scope>NUCLEOTIDE SEQUENCE [LARGE SCALE GENOMIC DNA]</scope>
    <scope>GENOME REANNOTATION</scope>
    <source>
        <strain>SC5314 / ATCC MYA-2876</strain>
    </source>
</reference>
<reference key="4">
    <citation type="submission" date="2000-06" db="UniProtKB">
        <title>A proteomic approach to analyse the serologic response to Candida albicans systemic infection in a murine model.</title>
        <authorList>
            <person name="Pitarch A."/>
            <person name="Diaz-Orejas R."/>
            <person name="Molero G."/>
            <person name="Pardo M."/>
            <person name="Sanchez M."/>
            <person name="Nombela C."/>
            <person name="Gil C."/>
        </authorList>
    </citation>
    <scope>PROTEIN SEQUENCE OF 2-14</scope>
    <source>
        <strain>SC5314 / ATCC MYA-2876</strain>
    </source>
</reference>
<reference key="5">
    <citation type="journal article" date="2000" name="Electrophoresis">
        <title>Cross-species identification of novel Candida albicans immunogenic proteins by combination of two-dimensional polyacrylamide gel electrophoresis and mass spectrometry.</title>
        <authorList>
            <person name="Pardo M."/>
            <person name="Ward M."/>
            <person name="Pitarch A."/>
            <person name="Sanchez M."/>
            <person name="Nombela C."/>
            <person name="Blackstock W."/>
            <person name="Gil C."/>
        </authorList>
    </citation>
    <scope>PROTEIN SEQUENCE OF 61-77</scope>
    <scope>IDENTIFICATION BY MASS SPECTROMETRY</scope>
    <source>
        <strain>SC5314 / ATCC MYA-2876</strain>
    </source>
</reference>
<reference key="6">
    <citation type="journal article" date="2004" name="Proteomics">
        <title>Proteomics-based identification of novel Candida albicans antigens for diagnosis of systemic candidiasis in patients with underlying hematological malignancies.</title>
        <authorList>
            <person name="Pitarch A."/>
            <person name="Abian J."/>
            <person name="Carrascal M."/>
            <person name="Sanchez M."/>
            <person name="Nombela C."/>
            <person name="Gil C."/>
        </authorList>
    </citation>
    <scope>PROTEIN SEQUENCE OF 99-109</scope>
    <scope>SUBCELLULAR LOCATION</scope>
    <scope>ANTIGENICITY</scope>
    <source>
        <strain>SC5314 / ATCC MYA-2876</strain>
        <tissue>Protoplast</tissue>
    </source>
</reference>
<evidence type="ECO:0000250" key="1">
    <source>
        <dbReference type="UniProtKB" id="P00950"/>
    </source>
</evidence>
<evidence type="ECO:0000269" key="2">
    <source>
    </source>
</evidence>
<evidence type="ECO:0000269" key="3">
    <source ref="4"/>
</evidence>
<evidence type="ECO:0000305" key="4"/>
<keyword id="KW-0963">Cytoplasm</keyword>
<keyword id="KW-0903">Direct protein sequencing</keyword>
<keyword id="KW-0324">Glycolysis</keyword>
<keyword id="KW-0413">Isomerase</keyword>
<keyword id="KW-1185">Reference proteome</keyword>
<accession>P82612</accession>
<accession>A0A1D8PGZ2</accession>
<accession>Q5AH93</accession>
<feature type="initiator methionine" description="Removed" evidence="3">
    <location>
        <position position="1"/>
    </location>
</feature>
<feature type="chain" id="PRO_0000179837" description="Phosphoglycerate mutase">
    <location>
        <begin position="2"/>
        <end position="248"/>
    </location>
</feature>
<feature type="active site" description="Tele-phosphohistidine intermediate" evidence="1">
    <location>
        <position position="9"/>
    </location>
</feature>
<feature type="active site" description="Proton donor/acceptor" evidence="1">
    <location>
        <position position="87"/>
    </location>
</feature>
<feature type="binding site" evidence="1">
    <location>
        <begin position="8"/>
        <end position="15"/>
    </location>
    <ligand>
        <name>substrate</name>
    </ligand>
</feature>
<feature type="binding site" evidence="1">
    <location>
        <begin position="21"/>
        <end position="22"/>
    </location>
    <ligand>
        <name>substrate</name>
    </ligand>
</feature>
<feature type="binding site" evidence="1">
    <location>
        <position position="60"/>
    </location>
    <ligand>
        <name>substrate</name>
    </ligand>
</feature>
<feature type="binding site" evidence="1">
    <location>
        <begin position="87"/>
        <end position="90"/>
    </location>
    <ligand>
        <name>substrate</name>
    </ligand>
</feature>
<feature type="binding site" evidence="1">
    <location>
        <position position="98"/>
    </location>
    <ligand>
        <name>substrate</name>
    </ligand>
</feature>
<feature type="binding site" evidence="1">
    <location>
        <begin position="114"/>
        <end position="115"/>
    </location>
    <ligand>
        <name>substrate</name>
    </ligand>
</feature>
<feature type="binding site" evidence="1">
    <location>
        <begin position="183"/>
        <end position="184"/>
    </location>
    <ligand>
        <name>substrate</name>
    </ligand>
</feature>
<feature type="site" description="Transition state stabilizer" evidence="1">
    <location>
        <position position="182"/>
    </location>
</feature>
<feature type="sequence conflict" description="In Ref. 5; AA sequence." evidence="4" ref="5">
    <original>IQ</original>
    <variation>LK</variation>
    <location>
        <begin position="62"/>
        <end position="63"/>
    </location>
</feature>
<name>PMGY_CANAL</name>
<comment type="catalytic activity">
    <reaction>
        <text>(2R)-2-phosphoglycerate = (2R)-3-phosphoglycerate</text>
        <dbReference type="Rhea" id="RHEA:15901"/>
        <dbReference type="ChEBI" id="CHEBI:58272"/>
        <dbReference type="ChEBI" id="CHEBI:58289"/>
        <dbReference type="EC" id="5.4.2.11"/>
    </reaction>
</comment>
<comment type="pathway">
    <text>Carbohydrate degradation; glycolysis; pyruvate from D-glyceraldehyde 3-phosphate: step 3/5.</text>
</comment>
<comment type="subcellular location">
    <subcellularLocation>
        <location evidence="2">Cytoplasm</location>
    </subcellularLocation>
</comment>
<comment type="miscellaneous">
    <text>Has antigenic properties.</text>
</comment>
<comment type="similarity">
    <text evidence="4">Belongs to the phosphoglycerate mutase family. BPG-dependent PGAM subfamily.</text>
</comment>
<proteinExistence type="evidence at protein level"/>